<reference key="1">
    <citation type="journal article" date="2003" name="Nat. Genet.">
        <title>Comparative analysis of the genome sequences of Bordetella pertussis, Bordetella parapertussis and Bordetella bronchiseptica.</title>
        <authorList>
            <person name="Parkhill J."/>
            <person name="Sebaihia M."/>
            <person name="Preston A."/>
            <person name="Murphy L.D."/>
            <person name="Thomson N.R."/>
            <person name="Harris D.E."/>
            <person name="Holden M.T.G."/>
            <person name="Churcher C.M."/>
            <person name="Bentley S.D."/>
            <person name="Mungall K.L."/>
            <person name="Cerdeno-Tarraga A.-M."/>
            <person name="Temple L."/>
            <person name="James K.D."/>
            <person name="Harris B."/>
            <person name="Quail M.A."/>
            <person name="Achtman M."/>
            <person name="Atkin R."/>
            <person name="Baker S."/>
            <person name="Basham D."/>
            <person name="Bason N."/>
            <person name="Cherevach I."/>
            <person name="Chillingworth T."/>
            <person name="Collins M."/>
            <person name="Cronin A."/>
            <person name="Davis P."/>
            <person name="Doggett J."/>
            <person name="Feltwell T."/>
            <person name="Goble A."/>
            <person name="Hamlin N."/>
            <person name="Hauser H."/>
            <person name="Holroyd S."/>
            <person name="Jagels K."/>
            <person name="Leather S."/>
            <person name="Moule S."/>
            <person name="Norberczak H."/>
            <person name="O'Neil S."/>
            <person name="Ormond D."/>
            <person name="Price C."/>
            <person name="Rabbinowitsch E."/>
            <person name="Rutter S."/>
            <person name="Sanders M."/>
            <person name="Saunders D."/>
            <person name="Seeger K."/>
            <person name="Sharp S."/>
            <person name="Simmonds M."/>
            <person name="Skelton J."/>
            <person name="Squares R."/>
            <person name="Squares S."/>
            <person name="Stevens K."/>
            <person name="Unwin L."/>
            <person name="Whitehead S."/>
            <person name="Barrell B.G."/>
            <person name="Maskell D.J."/>
        </authorList>
    </citation>
    <scope>NUCLEOTIDE SEQUENCE [LARGE SCALE GENOMIC DNA]</scope>
    <source>
        <strain>12822 / ATCC BAA-587 / NCTC 13253</strain>
    </source>
</reference>
<keyword id="KW-0067">ATP-binding</keyword>
<keyword id="KW-0436">Ligase</keyword>
<keyword id="KW-0460">Magnesium</keyword>
<keyword id="KW-0479">Metal-binding</keyword>
<keyword id="KW-0547">Nucleotide-binding</keyword>
<keyword id="KW-0658">Purine biosynthesis</keyword>
<proteinExistence type="inferred from homology"/>
<gene>
    <name evidence="1" type="primary">purT</name>
    <name type="ordered locus">BPP4027</name>
</gene>
<dbReference type="EC" id="6.3.1.21" evidence="1"/>
<dbReference type="EMBL" id="BX640435">
    <property type="protein sequence ID" value="CAE39310.1"/>
    <property type="molecule type" value="Genomic_DNA"/>
</dbReference>
<dbReference type="RefSeq" id="WP_010929351.1">
    <property type="nucleotide sequence ID" value="NC_002928.3"/>
</dbReference>
<dbReference type="SMR" id="Q7W3K5"/>
<dbReference type="GeneID" id="93205826"/>
<dbReference type="KEGG" id="bpa:BPP4027"/>
<dbReference type="HOGENOM" id="CLU_011534_1_3_4"/>
<dbReference type="UniPathway" id="UPA00074">
    <property type="reaction ID" value="UER00127"/>
</dbReference>
<dbReference type="Proteomes" id="UP000001421">
    <property type="component" value="Chromosome"/>
</dbReference>
<dbReference type="GO" id="GO:0005829">
    <property type="term" value="C:cytosol"/>
    <property type="evidence" value="ECO:0007669"/>
    <property type="project" value="TreeGrafter"/>
</dbReference>
<dbReference type="GO" id="GO:0005524">
    <property type="term" value="F:ATP binding"/>
    <property type="evidence" value="ECO:0007669"/>
    <property type="project" value="UniProtKB-UniRule"/>
</dbReference>
<dbReference type="GO" id="GO:0000287">
    <property type="term" value="F:magnesium ion binding"/>
    <property type="evidence" value="ECO:0007669"/>
    <property type="project" value="InterPro"/>
</dbReference>
<dbReference type="GO" id="GO:0043815">
    <property type="term" value="F:phosphoribosylglycinamide formyltransferase 2 activity"/>
    <property type="evidence" value="ECO:0007669"/>
    <property type="project" value="UniProtKB-UniRule"/>
</dbReference>
<dbReference type="GO" id="GO:0004644">
    <property type="term" value="F:phosphoribosylglycinamide formyltransferase activity"/>
    <property type="evidence" value="ECO:0007669"/>
    <property type="project" value="InterPro"/>
</dbReference>
<dbReference type="GO" id="GO:0006189">
    <property type="term" value="P:'de novo' IMP biosynthetic process"/>
    <property type="evidence" value="ECO:0007669"/>
    <property type="project" value="UniProtKB-UniRule"/>
</dbReference>
<dbReference type="FunFam" id="3.30.1490.20:FF:000013">
    <property type="entry name" value="Formate-dependent phosphoribosylglycinamide formyltransferase"/>
    <property type="match status" value="1"/>
</dbReference>
<dbReference type="Gene3D" id="3.40.50.20">
    <property type="match status" value="1"/>
</dbReference>
<dbReference type="Gene3D" id="3.30.1490.20">
    <property type="entry name" value="ATP-grasp fold, A domain"/>
    <property type="match status" value="1"/>
</dbReference>
<dbReference type="Gene3D" id="3.30.470.20">
    <property type="entry name" value="ATP-grasp fold, B domain"/>
    <property type="match status" value="1"/>
</dbReference>
<dbReference type="HAMAP" id="MF_01643">
    <property type="entry name" value="PurT"/>
    <property type="match status" value="1"/>
</dbReference>
<dbReference type="InterPro" id="IPR011761">
    <property type="entry name" value="ATP-grasp"/>
</dbReference>
<dbReference type="InterPro" id="IPR003135">
    <property type="entry name" value="ATP-grasp_carboxylate-amine"/>
</dbReference>
<dbReference type="InterPro" id="IPR013815">
    <property type="entry name" value="ATP_grasp_subdomain_1"/>
</dbReference>
<dbReference type="InterPro" id="IPR016185">
    <property type="entry name" value="PreATP-grasp_dom_sf"/>
</dbReference>
<dbReference type="InterPro" id="IPR005862">
    <property type="entry name" value="PurT"/>
</dbReference>
<dbReference type="InterPro" id="IPR054350">
    <property type="entry name" value="PurT/PurK_preATP-grasp"/>
</dbReference>
<dbReference type="InterPro" id="IPR048740">
    <property type="entry name" value="PurT_C"/>
</dbReference>
<dbReference type="InterPro" id="IPR011054">
    <property type="entry name" value="Rudment_hybrid_motif"/>
</dbReference>
<dbReference type="NCBIfam" id="NF006766">
    <property type="entry name" value="PRK09288.1"/>
    <property type="match status" value="1"/>
</dbReference>
<dbReference type="NCBIfam" id="TIGR01142">
    <property type="entry name" value="purT"/>
    <property type="match status" value="1"/>
</dbReference>
<dbReference type="PANTHER" id="PTHR43055">
    <property type="entry name" value="FORMATE-DEPENDENT PHOSPHORIBOSYLGLYCINAMIDE FORMYLTRANSFERASE"/>
    <property type="match status" value="1"/>
</dbReference>
<dbReference type="PANTHER" id="PTHR43055:SF1">
    <property type="entry name" value="FORMATE-DEPENDENT PHOSPHORIBOSYLGLYCINAMIDE FORMYLTRANSFERASE"/>
    <property type="match status" value="1"/>
</dbReference>
<dbReference type="Pfam" id="PF02222">
    <property type="entry name" value="ATP-grasp"/>
    <property type="match status" value="1"/>
</dbReference>
<dbReference type="Pfam" id="PF21244">
    <property type="entry name" value="PurT_C"/>
    <property type="match status" value="1"/>
</dbReference>
<dbReference type="Pfam" id="PF22660">
    <property type="entry name" value="RS_preATP-grasp-like"/>
    <property type="match status" value="1"/>
</dbReference>
<dbReference type="SUPFAM" id="SSF56059">
    <property type="entry name" value="Glutathione synthetase ATP-binding domain-like"/>
    <property type="match status" value="1"/>
</dbReference>
<dbReference type="SUPFAM" id="SSF52440">
    <property type="entry name" value="PreATP-grasp domain"/>
    <property type="match status" value="1"/>
</dbReference>
<dbReference type="SUPFAM" id="SSF51246">
    <property type="entry name" value="Rudiment single hybrid motif"/>
    <property type="match status" value="1"/>
</dbReference>
<dbReference type="PROSITE" id="PS50975">
    <property type="entry name" value="ATP_GRASP"/>
    <property type="match status" value="1"/>
</dbReference>
<accession>Q7W3K5</accession>
<evidence type="ECO:0000255" key="1">
    <source>
        <dbReference type="HAMAP-Rule" id="MF_01643"/>
    </source>
</evidence>
<protein>
    <recommendedName>
        <fullName evidence="1">Formate-dependent phosphoribosylglycinamide formyltransferase</fullName>
        <ecNumber evidence="1">6.3.1.21</ecNumber>
    </recommendedName>
    <alternativeName>
        <fullName evidence="1">5'-phosphoribosylglycinamide transformylase 2</fullName>
    </alternativeName>
    <alternativeName>
        <fullName evidence="1">Formate-dependent GAR transformylase</fullName>
    </alternativeName>
    <alternativeName>
        <fullName evidence="1">GAR transformylase 2</fullName>
        <shortName evidence="1">GART 2</shortName>
    </alternativeName>
    <alternativeName>
        <fullName evidence="1">Non-folate glycinamide ribonucleotide transformylase</fullName>
    </alternativeName>
    <alternativeName>
        <fullName evidence="1">Phosphoribosylglycinamide formyltransferase 2</fullName>
    </alternativeName>
</protein>
<organism>
    <name type="scientific">Bordetella parapertussis (strain 12822 / ATCC BAA-587 / NCTC 13253)</name>
    <dbReference type="NCBI Taxonomy" id="257311"/>
    <lineage>
        <taxon>Bacteria</taxon>
        <taxon>Pseudomonadati</taxon>
        <taxon>Pseudomonadota</taxon>
        <taxon>Betaproteobacteria</taxon>
        <taxon>Burkholderiales</taxon>
        <taxon>Alcaligenaceae</taxon>
        <taxon>Bordetella</taxon>
    </lineage>
</organism>
<comment type="function">
    <text evidence="1">Involved in the de novo purine biosynthesis. Catalyzes the transfer of formate to 5-phospho-ribosyl-glycinamide (GAR), producing 5-phospho-ribosyl-N-formylglycinamide (FGAR). Formate is provided by PurU via hydrolysis of 10-formyl-tetrahydrofolate.</text>
</comment>
<comment type="catalytic activity">
    <reaction evidence="1">
        <text>N(1)-(5-phospho-beta-D-ribosyl)glycinamide + formate + ATP = N(2)-formyl-N(1)-(5-phospho-beta-D-ribosyl)glycinamide + ADP + phosphate + H(+)</text>
        <dbReference type="Rhea" id="RHEA:24829"/>
        <dbReference type="ChEBI" id="CHEBI:15378"/>
        <dbReference type="ChEBI" id="CHEBI:15740"/>
        <dbReference type="ChEBI" id="CHEBI:30616"/>
        <dbReference type="ChEBI" id="CHEBI:43474"/>
        <dbReference type="ChEBI" id="CHEBI:143788"/>
        <dbReference type="ChEBI" id="CHEBI:147286"/>
        <dbReference type="ChEBI" id="CHEBI:456216"/>
        <dbReference type="EC" id="6.3.1.21"/>
    </reaction>
    <physiologicalReaction direction="left-to-right" evidence="1">
        <dbReference type="Rhea" id="RHEA:24830"/>
    </physiologicalReaction>
</comment>
<comment type="pathway">
    <text evidence="1">Purine metabolism; IMP biosynthesis via de novo pathway; N(2)-formyl-N(1)-(5-phospho-D-ribosyl)glycinamide from N(1)-(5-phospho-D-ribosyl)glycinamide (formate route): step 1/1.</text>
</comment>
<comment type="subunit">
    <text evidence="1">Homodimer.</text>
</comment>
<comment type="similarity">
    <text evidence="1">Belongs to the PurK/PurT family.</text>
</comment>
<feature type="chain" id="PRO_0000319132" description="Formate-dependent phosphoribosylglycinamide formyltransferase">
    <location>
        <begin position="1"/>
        <end position="406"/>
    </location>
</feature>
<feature type="domain" description="ATP-grasp" evidence="1">
    <location>
        <begin position="125"/>
        <end position="320"/>
    </location>
</feature>
<feature type="binding site" evidence="1">
    <location>
        <begin position="27"/>
        <end position="28"/>
    </location>
    <ligand>
        <name>N(1)-(5-phospho-beta-D-ribosyl)glycinamide</name>
        <dbReference type="ChEBI" id="CHEBI:143788"/>
    </ligand>
</feature>
<feature type="binding site" evidence="1">
    <location>
        <position position="87"/>
    </location>
    <ligand>
        <name>N(1)-(5-phospho-beta-D-ribosyl)glycinamide</name>
        <dbReference type="ChEBI" id="CHEBI:143788"/>
    </ligand>
</feature>
<feature type="binding site" evidence="1">
    <location>
        <position position="120"/>
    </location>
    <ligand>
        <name>ATP</name>
        <dbReference type="ChEBI" id="CHEBI:30616"/>
    </ligand>
</feature>
<feature type="binding site" evidence="1">
    <location>
        <position position="162"/>
    </location>
    <ligand>
        <name>ATP</name>
        <dbReference type="ChEBI" id="CHEBI:30616"/>
    </ligand>
</feature>
<feature type="binding site" evidence="1">
    <location>
        <begin position="167"/>
        <end position="172"/>
    </location>
    <ligand>
        <name>ATP</name>
        <dbReference type="ChEBI" id="CHEBI:30616"/>
    </ligand>
</feature>
<feature type="binding site" evidence="1">
    <location>
        <begin position="202"/>
        <end position="205"/>
    </location>
    <ligand>
        <name>ATP</name>
        <dbReference type="ChEBI" id="CHEBI:30616"/>
    </ligand>
</feature>
<feature type="binding site" evidence="1">
    <location>
        <position position="210"/>
    </location>
    <ligand>
        <name>ATP</name>
        <dbReference type="ChEBI" id="CHEBI:30616"/>
    </ligand>
</feature>
<feature type="binding site" evidence="1">
    <location>
        <position position="279"/>
    </location>
    <ligand>
        <name>Mg(2+)</name>
        <dbReference type="ChEBI" id="CHEBI:18420"/>
    </ligand>
</feature>
<feature type="binding site" evidence="1">
    <location>
        <position position="291"/>
    </location>
    <ligand>
        <name>Mg(2+)</name>
        <dbReference type="ChEBI" id="CHEBI:18420"/>
    </ligand>
</feature>
<feature type="binding site" evidence="1">
    <location>
        <position position="298"/>
    </location>
    <ligand>
        <name>N(1)-(5-phospho-beta-D-ribosyl)glycinamide</name>
        <dbReference type="ChEBI" id="CHEBI:143788"/>
    </ligand>
</feature>
<feature type="binding site" evidence="1">
    <location>
        <position position="367"/>
    </location>
    <ligand>
        <name>N(1)-(5-phospho-beta-D-ribosyl)glycinamide</name>
        <dbReference type="ChEBI" id="CHEBI:143788"/>
    </ligand>
</feature>
<feature type="binding site" evidence="1">
    <location>
        <begin position="374"/>
        <end position="375"/>
    </location>
    <ligand>
        <name>N(1)-(5-phospho-beta-D-ribosyl)glycinamide</name>
        <dbReference type="ChEBI" id="CHEBI:143788"/>
    </ligand>
</feature>
<sequence length="406" mass="43375">MSTFPAPVLGTPLSPTATRVMLLGAGELGKEVVIALQRLGVEVIAVDRYADAPGHQVAHRAHVVSMTDPQALRQVIEQERPHVVVPEIEAIATDLLVALEDEGAVRVTPTARAAHLTMNREGIHRLAAETLGLPTSPYRFVDTEQALREAIDGGIGYPCVIKPVMSSSGKGQSIIRSADDIAAAWRYAQEGGRVGAGRVIVEGFIEFDYEITLLTVRARGADGQIVTQFCEPIGHRQVDGDYVESWQPHPMSPAALQRSREIALAVTGDLGGLGIFGVELFVAGDQVWFSEVSPRPHDTGMVTLISQVQNEFELHARALLGLPVDTRLRQPGASSVIYGGVEARGVAFEGVAQALAEPGTDIRLFGKPESFAKRRMGVGLAVADDVDQARAKAARVSQAVRVRAGA</sequence>
<name>PURT_BORPA</name>